<sequence length="173" mass="19030">MLGIADMQPRQLAAQILNFALVLSTAFMMWKGLSVVSDSPSPIVVVLSGSMEPAFQRGDLLFLWNRGADTQVGEIVVYNVKGKDIPIVHRVVRRYGGGKTPLRLLTKGDNNLADDTELYAAGQSFLNRQEDVIGSVVGFIPFVGYVTILLSEHPWLKQVMLGLMGVMVVLQRE</sequence>
<evidence type="ECO:0000250" key="1">
    <source>
        <dbReference type="UniProtKB" id="P15367"/>
    </source>
</evidence>
<evidence type="ECO:0000250" key="2">
    <source>
        <dbReference type="UniProtKB" id="P67812"/>
    </source>
</evidence>
<evidence type="ECO:0000255" key="3"/>
<evidence type="ECO:0000305" key="4"/>
<gene>
    <name type="primary">sec11</name>
    <name type="ORF">PTRG_08585</name>
</gene>
<reference key="1">
    <citation type="journal article" date="2013" name="G3 (Bethesda)">
        <title>Comparative genomics of a plant-pathogenic fungus, Pyrenophora tritici-repentis, reveals transduplication and the impact of repeat elements on pathogenicity and population divergence.</title>
        <authorList>
            <person name="Manning V.A."/>
            <person name="Pandelova I."/>
            <person name="Dhillon B."/>
            <person name="Wilhelm L.J."/>
            <person name="Goodwin S.B."/>
            <person name="Berlin A.M."/>
            <person name="Figueroa M."/>
            <person name="Freitag M."/>
            <person name="Hane J.K."/>
            <person name="Henrissat B."/>
            <person name="Holman W.H."/>
            <person name="Kodira C.D."/>
            <person name="Martin J."/>
            <person name="Oliver R.P."/>
            <person name="Robbertse B."/>
            <person name="Schackwitz W."/>
            <person name="Schwartz D.C."/>
            <person name="Spatafora J.W."/>
            <person name="Turgeon B.G."/>
            <person name="Yandava C."/>
            <person name="Young S."/>
            <person name="Zhou S."/>
            <person name="Zeng Q."/>
            <person name="Grigoriev I.V."/>
            <person name="Ma L.-J."/>
            <person name="Ciuffetti L.M."/>
        </authorList>
    </citation>
    <scope>NUCLEOTIDE SEQUENCE [LARGE SCALE GENOMIC DNA]</scope>
    <source>
        <strain>Pt-1C-BFP</strain>
    </source>
</reference>
<keyword id="KW-0256">Endoplasmic reticulum</keyword>
<keyword id="KW-0378">Hydrolase</keyword>
<keyword id="KW-0472">Membrane</keyword>
<keyword id="KW-0645">Protease</keyword>
<keyword id="KW-1185">Reference proteome</keyword>
<keyword id="KW-0735">Signal-anchor</keyword>
<keyword id="KW-0812">Transmembrane</keyword>
<keyword id="KW-1133">Transmembrane helix</keyword>
<organism>
    <name type="scientific">Pyrenophora tritici-repentis (strain Pt-1C-BFP)</name>
    <name type="common">Wheat tan spot fungus</name>
    <name type="synonym">Drechslera tritici-repentis</name>
    <dbReference type="NCBI Taxonomy" id="426418"/>
    <lineage>
        <taxon>Eukaryota</taxon>
        <taxon>Fungi</taxon>
        <taxon>Dikarya</taxon>
        <taxon>Ascomycota</taxon>
        <taxon>Pezizomycotina</taxon>
        <taxon>Dothideomycetes</taxon>
        <taxon>Pleosporomycetidae</taxon>
        <taxon>Pleosporales</taxon>
        <taxon>Pleosporineae</taxon>
        <taxon>Pleosporaceae</taxon>
        <taxon>Pyrenophora</taxon>
    </lineage>
</organism>
<comment type="function">
    <text evidence="1 2">Catalytic component of the signal peptidase complex (SPC) which catalyzes the cleavage of N-terminal signal sequences from nascent proteins as they are translocated into the lumen of the endoplasmic reticulum (By similarity). Specifically cleaves N-terminal signal peptides that contain a hydrophobic alpha-helix (h-region) shorter than 18-20 amino acids (By similarity).</text>
</comment>
<comment type="catalytic activity">
    <reaction evidence="1">
        <text>Cleavage of hydrophobic, N-terminal signal or leader sequences from secreted and periplasmic proteins.</text>
        <dbReference type="EC" id="3.4.21.89"/>
    </reaction>
</comment>
<comment type="subunit">
    <text evidence="1 2">Component of the signal peptidase complex (SPC) composed of a catalytic subunit SEC11 and three accessory subunits SPC1, SPC2 and SPC3 (By similarity). The complex induces a local thinning of the ER membrane which is used to measure the length of the signal peptide (SP) h-region of protein substrates. This ensures the selectivity of the complex towards h-regions shorter than 18-20 amino acids (By similarity). SPC associates with the translocon complex (By similarity).</text>
</comment>
<comment type="subcellular location">
    <subcellularLocation>
        <location evidence="1">Endoplasmic reticulum membrane</location>
        <topology evidence="1">Single-pass type II membrane protein</topology>
    </subcellularLocation>
</comment>
<comment type="domain">
    <text evidence="2">The C-terminal short (CTS) helix is essential for catalytic activity. It may be accommodated as a transmembrane helix in the thinned membrane environment of the complex, similarly to the signal peptide in the complex substrates.</text>
</comment>
<comment type="similarity">
    <text evidence="4">Belongs to the peptidase S26B family.</text>
</comment>
<proteinExistence type="inferred from homology"/>
<feature type="chain" id="PRO_0000412353" description="Signal peptidase complex catalytic subunit sec11">
    <location>
        <begin position="1"/>
        <end position="173"/>
    </location>
</feature>
<feature type="topological domain" description="Cytoplasmic" evidence="4">
    <location>
        <begin position="1"/>
        <end position="15"/>
    </location>
</feature>
<feature type="transmembrane region" description="Helical; Signal-anchor for type II membrane protein" evidence="3">
    <location>
        <begin position="16"/>
        <end position="36"/>
    </location>
</feature>
<feature type="topological domain" description="Lumenal" evidence="4">
    <location>
        <begin position="37"/>
        <end position="173"/>
    </location>
</feature>
<feature type="region of interest" description="C-terminal short (CTS) helix" evidence="2">
    <location>
        <begin position="159"/>
        <end position="170"/>
    </location>
</feature>
<feature type="active site" description="Charge relay system" evidence="1">
    <location>
        <position position="50"/>
    </location>
</feature>
<feature type="active site" description="Charge relay system" evidence="1">
    <location>
        <position position="89"/>
    </location>
</feature>
<feature type="active site" description="Charge relay system" evidence="1">
    <location>
        <position position="115"/>
    </location>
</feature>
<protein>
    <recommendedName>
        <fullName>Signal peptidase complex catalytic subunit sec11</fullName>
        <ecNumber evidence="1">3.4.21.89</ecNumber>
    </recommendedName>
    <alternativeName>
        <fullName>Signal peptidase I</fullName>
    </alternativeName>
</protein>
<dbReference type="EC" id="3.4.21.89" evidence="1"/>
<dbReference type="EMBL" id="DS231623">
    <property type="protein sequence ID" value="EDU51504.1"/>
    <property type="molecule type" value="Genomic_DNA"/>
</dbReference>
<dbReference type="RefSeq" id="XP_001938917.1">
    <property type="nucleotide sequence ID" value="XM_001938882.1"/>
</dbReference>
<dbReference type="SMR" id="B2WEL2"/>
<dbReference type="FunCoup" id="B2WEL2">
    <property type="interactions" value="659"/>
</dbReference>
<dbReference type="STRING" id="426418.B2WEL2"/>
<dbReference type="MEROPS" id="S26.010"/>
<dbReference type="EnsemblFungi" id="EDU51504">
    <property type="protein sequence ID" value="EDU51504"/>
    <property type="gene ID" value="PTRG_08585"/>
</dbReference>
<dbReference type="GeneID" id="6346871"/>
<dbReference type="KEGG" id="ptrr:6346871"/>
<dbReference type="eggNOG" id="KOG3342">
    <property type="taxonomic scope" value="Eukaryota"/>
</dbReference>
<dbReference type="HOGENOM" id="CLU_089996_0_0_1"/>
<dbReference type="InParanoid" id="B2WEL2"/>
<dbReference type="OMA" id="ILMNEYP"/>
<dbReference type="OrthoDB" id="27436at28556"/>
<dbReference type="Proteomes" id="UP000001471">
    <property type="component" value="Unassembled WGS sequence"/>
</dbReference>
<dbReference type="GO" id="GO:0005787">
    <property type="term" value="C:signal peptidase complex"/>
    <property type="evidence" value="ECO:0007669"/>
    <property type="project" value="EnsemblFungi"/>
</dbReference>
<dbReference type="GO" id="GO:0004252">
    <property type="term" value="F:serine-type endopeptidase activity"/>
    <property type="evidence" value="ECO:0007669"/>
    <property type="project" value="UniProtKB-EC"/>
</dbReference>
<dbReference type="GO" id="GO:0045047">
    <property type="term" value="P:protein targeting to ER"/>
    <property type="evidence" value="ECO:0007669"/>
    <property type="project" value="EnsemblFungi"/>
</dbReference>
<dbReference type="GO" id="GO:0006465">
    <property type="term" value="P:signal peptide processing"/>
    <property type="evidence" value="ECO:0007669"/>
    <property type="project" value="EnsemblFungi"/>
</dbReference>
<dbReference type="CDD" id="cd06530">
    <property type="entry name" value="S26_SPase_I"/>
    <property type="match status" value="1"/>
</dbReference>
<dbReference type="InterPro" id="IPR036286">
    <property type="entry name" value="LexA/Signal_pep-like_sf"/>
</dbReference>
<dbReference type="InterPro" id="IPR019756">
    <property type="entry name" value="Pept_S26A_signal_pept_1_Ser-AS"/>
</dbReference>
<dbReference type="InterPro" id="IPR015927">
    <property type="entry name" value="Peptidase_S24_S26A/B/C"/>
</dbReference>
<dbReference type="InterPro" id="IPR019533">
    <property type="entry name" value="Peptidase_S26"/>
</dbReference>
<dbReference type="InterPro" id="IPR001733">
    <property type="entry name" value="Peptidase_S26B"/>
</dbReference>
<dbReference type="NCBIfam" id="TIGR02228">
    <property type="entry name" value="sigpep_I_arch"/>
    <property type="match status" value="1"/>
</dbReference>
<dbReference type="PANTHER" id="PTHR10806">
    <property type="entry name" value="SIGNAL PEPTIDASE COMPLEX CATALYTIC SUBUNIT SEC11"/>
    <property type="match status" value="1"/>
</dbReference>
<dbReference type="PANTHER" id="PTHR10806:SF6">
    <property type="entry name" value="SIGNAL PEPTIDASE COMPLEX CATALYTIC SUBUNIT SEC11"/>
    <property type="match status" value="1"/>
</dbReference>
<dbReference type="Pfam" id="PF00717">
    <property type="entry name" value="Peptidase_S24"/>
    <property type="match status" value="1"/>
</dbReference>
<dbReference type="PRINTS" id="PR00728">
    <property type="entry name" value="SIGNALPTASE"/>
</dbReference>
<dbReference type="SUPFAM" id="SSF51306">
    <property type="entry name" value="LexA/Signal peptidase"/>
    <property type="match status" value="1"/>
</dbReference>
<dbReference type="PROSITE" id="PS00501">
    <property type="entry name" value="SPASE_I_1"/>
    <property type="match status" value="1"/>
</dbReference>
<accession>B2WEL2</accession>
<name>SEC11_PYRTR</name>